<comment type="function">
    <text evidence="1">Catalyzes amidations at positions B, D, E, and G on adenosylcobyrinic A,C-diamide. NH(2) groups are provided by glutamine, and one molecule of ATP is hydrogenolyzed for each amidation.</text>
</comment>
<comment type="pathway">
    <text evidence="1">Cofactor biosynthesis; adenosylcobalamin biosynthesis.</text>
</comment>
<comment type="similarity">
    <text evidence="1">Belongs to the CobB/CobQ family. CobQ subfamily.</text>
</comment>
<organism>
    <name type="scientific">Phocaeicola vulgatus (strain ATCC 8482 / DSM 1447 / JCM 5826 / CCUG 4940 / NBRC 14291 / NCTC 11154)</name>
    <name type="common">Bacteroides vulgatus</name>
    <dbReference type="NCBI Taxonomy" id="435590"/>
    <lineage>
        <taxon>Bacteria</taxon>
        <taxon>Pseudomonadati</taxon>
        <taxon>Bacteroidota</taxon>
        <taxon>Bacteroidia</taxon>
        <taxon>Bacteroidales</taxon>
        <taxon>Bacteroidaceae</taxon>
        <taxon>Phocaeicola</taxon>
    </lineage>
</organism>
<keyword id="KW-0169">Cobalamin biosynthesis</keyword>
<keyword id="KW-0315">Glutamine amidotransferase</keyword>
<reference key="1">
    <citation type="journal article" date="2007" name="PLoS Biol.">
        <title>Evolution of symbiotic bacteria in the distal human intestine.</title>
        <authorList>
            <person name="Xu J."/>
            <person name="Mahowald M.A."/>
            <person name="Ley R.E."/>
            <person name="Lozupone C.A."/>
            <person name="Hamady M."/>
            <person name="Martens E.C."/>
            <person name="Henrissat B."/>
            <person name="Coutinho P.M."/>
            <person name="Minx P."/>
            <person name="Latreille P."/>
            <person name="Cordum H."/>
            <person name="Van Brunt A."/>
            <person name="Kim K."/>
            <person name="Fulton R.S."/>
            <person name="Fulton L.A."/>
            <person name="Clifton S.W."/>
            <person name="Wilson R.K."/>
            <person name="Knight R.D."/>
            <person name="Gordon J.I."/>
        </authorList>
    </citation>
    <scope>NUCLEOTIDE SEQUENCE [LARGE SCALE GENOMIC DNA]</scope>
    <source>
        <strain>ATCC 8482 / DSM 1447 / JCM 5826 / CCUG 4940 / NBRC 14291 / NCTC 11154</strain>
    </source>
</reference>
<feature type="chain" id="PRO_1000002347" description="Cobyric acid synthase">
    <location>
        <begin position="1"/>
        <end position="496"/>
    </location>
</feature>
<feature type="domain" description="GATase cobBQ-type" evidence="1">
    <location>
        <begin position="256"/>
        <end position="444"/>
    </location>
</feature>
<feature type="active site" description="Nucleophile" evidence="1">
    <location>
        <position position="337"/>
    </location>
</feature>
<feature type="active site" evidence="1">
    <location>
        <position position="436"/>
    </location>
</feature>
<sequence length="496" mass="55363">MKKNLHPIMLAGTGSDVGKSVIAAALCRIFKQDGYRPAPFKAQNMALNSYATPEGLEIGRAQAVQAEAAGVPCHTDMNPLLLKPSSDHTSQVVLNGRPIGNRNAFEYFRKEGREELRQEVNAAFDRLAARYNPIVMEGAGSISEINLRDTDLVNMPMACYADADVILVADIDRGGVFASVYGSVMLQTPEDKKRIKGVIINKFRGDIRLFESGVKMMEDLCGIPVLGIIPYYRNIHIEEEDSVGLDYKRMQAVEGKINIAVVLLRHLSNFTDFNRLERDERVHLYYTNNTEDLAKADIILLPGSKSTLDDLYELRRNGVAQAVLRAHREGVTVMGICGGYQLMGLEIHDPEGVEGEIRQLPGLGLLPVITTMQGEKVTRQVNFHFLENAETCQGYEIHMGETRPVPGEAVVPLNKLEDGGEDGCFVNQKCMGSYIHGILDNQAFIDYLLEPYAEKLECHTVLDYRTYKEEQYDKLAEHVRSHLNLPLLYQIMSGND</sequence>
<accession>A6L4Y5</accession>
<name>COBQ_PHOV8</name>
<dbReference type="EMBL" id="CP000139">
    <property type="protein sequence ID" value="ABR40749.1"/>
    <property type="molecule type" value="Genomic_DNA"/>
</dbReference>
<dbReference type="RefSeq" id="WP_012055547.1">
    <property type="nucleotide sequence ID" value="NZ_CAXVNH010000005.1"/>
</dbReference>
<dbReference type="SMR" id="A6L4Y5"/>
<dbReference type="STRING" id="435590.BVU_3115"/>
<dbReference type="PaxDb" id="435590-BVU_3115"/>
<dbReference type="DNASU" id="5304076"/>
<dbReference type="GeneID" id="5304076"/>
<dbReference type="KEGG" id="bvu:BVU_3115"/>
<dbReference type="eggNOG" id="COG1492">
    <property type="taxonomic scope" value="Bacteria"/>
</dbReference>
<dbReference type="HOGENOM" id="CLU_019250_2_2_10"/>
<dbReference type="BioCyc" id="BVUL435590:G1G59-3238-MONOMER"/>
<dbReference type="UniPathway" id="UPA00148"/>
<dbReference type="Proteomes" id="UP000002861">
    <property type="component" value="Chromosome"/>
</dbReference>
<dbReference type="GO" id="GO:0015420">
    <property type="term" value="F:ABC-type vitamin B12 transporter activity"/>
    <property type="evidence" value="ECO:0007669"/>
    <property type="project" value="UniProtKB-UniRule"/>
</dbReference>
<dbReference type="GO" id="GO:0003824">
    <property type="term" value="F:catalytic activity"/>
    <property type="evidence" value="ECO:0007669"/>
    <property type="project" value="InterPro"/>
</dbReference>
<dbReference type="GO" id="GO:0009236">
    <property type="term" value="P:cobalamin biosynthetic process"/>
    <property type="evidence" value="ECO:0007669"/>
    <property type="project" value="UniProtKB-UniRule"/>
</dbReference>
<dbReference type="CDD" id="cd05389">
    <property type="entry name" value="CobQ_N"/>
    <property type="match status" value="1"/>
</dbReference>
<dbReference type="CDD" id="cd01750">
    <property type="entry name" value="GATase1_CobQ"/>
    <property type="match status" value="1"/>
</dbReference>
<dbReference type="Gene3D" id="3.40.50.880">
    <property type="match status" value="1"/>
</dbReference>
<dbReference type="Gene3D" id="3.40.50.300">
    <property type="entry name" value="P-loop containing nucleotide triphosphate hydrolases"/>
    <property type="match status" value="1"/>
</dbReference>
<dbReference type="HAMAP" id="MF_00028">
    <property type="entry name" value="CobQ"/>
    <property type="match status" value="1"/>
</dbReference>
<dbReference type="InterPro" id="IPR029062">
    <property type="entry name" value="Class_I_gatase-like"/>
</dbReference>
<dbReference type="InterPro" id="IPR002586">
    <property type="entry name" value="CobQ/CobB/MinD/ParA_Nub-bd_dom"/>
</dbReference>
<dbReference type="InterPro" id="IPR033949">
    <property type="entry name" value="CobQ_GATase1"/>
</dbReference>
<dbReference type="InterPro" id="IPR047045">
    <property type="entry name" value="CobQ_N"/>
</dbReference>
<dbReference type="InterPro" id="IPR004459">
    <property type="entry name" value="CobQ_synth"/>
</dbReference>
<dbReference type="InterPro" id="IPR011698">
    <property type="entry name" value="GATase_3"/>
</dbReference>
<dbReference type="InterPro" id="IPR027417">
    <property type="entry name" value="P-loop_NTPase"/>
</dbReference>
<dbReference type="NCBIfam" id="TIGR00313">
    <property type="entry name" value="cobQ"/>
    <property type="match status" value="1"/>
</dbReference>
<dbReference type="NCBIfam" id="NF001989">
    <property type="entry name" value="PRK00784.1"/>
    <property type="match status" value="1"/>
</dbReference>
<dbReference type="PANTHER" id="PTHR21343:SF1">
    <property type="entry name" value="COBYRIC ACID SYNTHASE"/>
    <property type="match status" value="1"/>
</dbReference>
<dbReference type="PANTHER" id="PTHR21343">
    <property type="entry name" value="DETHIOBIOTIN SYNTHETASE"/>
    <property type="match status" value="1"/>
</dbReference>
<dbReference type="Pfam" id="PF01656">
    <property type="entry name" value="CbiA"/>
    <property type="match status" value="1"/>
</dbReference>
<dbReference type="Pfam" id="PF07685">
    <property type="entry name" value="GATase_3"/>
    <property type="match status" value="1"/>
</dbReference>
<dbReference type="SUPFAM" id="SSF52317">
    <property type="entry name" value="Class I glutamine amidotransferase-like"/>
    <property type="match status" value="1"/>
</dbReference>
<dbReference type="SUPFAM" id="SSF52540">
    <property type="entry name" value="P-loop containing nucleoside triphosphate hydrolases"/>
    <property type="match status" value="1"/>
</dbReference>
<dbReference type="PROSITE" id="PS51274">
    <property type="entry name" value="GATASE_COBBQ"/>
    <property type="match status" value="1"/>
</dbReference>
<evidence type="ECO:0000255" key="1">
    <source>
        <dbReference type="HAMAP-Rule" id="MF_00028"/>
    </source>
</evidence>
<gene>
    <name evidence="1" type="primary">cobQ</name>
    <name type="ordered locus">BVU_3115</name>
</gene>
<protein>
    <recommendedName>
        <fullName evidence="1">Cobyric acid synthase</fullName>
    </recommendedName>
</protein>
<proteinExistence type="inferred from homology"/>